<comment type="function">
    <text evidence="1">Component of the acetyl coenzyme A carboxylase (ACC) complex. First, biotin carboxylase catalyzes the carboxylation of biotin on its carrier protein (BCCP) and then the CO(2) group is transferred by the carboxyltransferase to acetyl-CoA to form malonyl-CoA.</text>
</comment>
<comment type="catalytic activity">
    <reaction evidence="1">
        <text>N(6)-carboxybiotinyl-L-lysyl-[protein] + acetyl-CoA = N(6)-biotinyl-L-lysyl-[protein] + malonyl-CoA</text>
        <dbReference type="Rhea" id="RHEA:54728"/>
        <dbReference type="Rhea" id="RHEA-COMP:10505"/>
        <dbReference type="Rhea" id="RHEA-COMP:10506"/>
        <dbReference type="ChEBI" id="CHEBI:57288"/>
        <dbReference type="ChEBI" id="CHEBI:57384"/>
        <dbReference type="ChEBI" id="CHEBI:83144"/>
        <dbReference type="ChEBI" id="CHEBI:83145"/>
        <dbReference type="EC" id="2.1.3.15"/>
    </reaction>
</comment>
<comment type="pathway">
    <text evidence="1">Lipid metabolism; malonyl-CoA biosynthesis; malonyl-CoA from acetyl-CoA: step 1/1.</text>
</comment>
<comment type="subunit">
    <text evidence="1">Acetyl-CoA carboxylase is a heterohexamer composed of biotin carboxyl carrier protein (AccB), biotin carboxylase (AccC) and two subunits each of ACCase subunit alpha (AccA) and ACCase subunit beta (AccD).</text>
</comment>
<comment type="subcellular location">
    <subcellularLocation>
        <location evidence="1">Cytoplasm</location>
    </subcellularLocation>
</comment>
<comment type="similarity">
    <text evidence="1">Belongs to the AccA family.</text>
</comment>
<accession>Q7W860</accession>
<sequence>MRNTFLEFEQPLAELENKIEQLRYVQADSAVDISDEIGRLQQKSQNLAKEIYGKLTPWQTALVARHPQRPYTLDYVREIFTDFHELHGDRMYADDQSIVGGLARFNGSACMVIGHQKGRDTKERAARNFGMPRPEGYRKALRLMRLAEKFRLPIFTFIDTPGAYPGIGAEERGQSEAIGRNLYAMAELKVPVICTVIGEGGSGGALAIAVGNAVLMLQYATYSVISPEGCASILWRSADKAPEAAEALAITAPRLKDLGLVDRVVNEPVGGAHRDPRVMARLLRRALGDALRQLQGLGPEQLVDQRLQRLMSYGRFQEVRA</sequence>
<protein>
    <recommendedName>
        <fullName evidence="1">Acetyl-coenzyme A carboxylase carboxyl transferase subunit alpha</fullName>
        <shortName evidence="1">ACCase subunit alpha</shortName>
        <shortName evidence="1">Acetyl-CoA carboxylase carboxyltransferase subunit alpha</shortName>
        <ecNumber evidence="1">2.1.3.15</ecNumber>
    </recommendedName>
</protein>
<name>ACCA_BORPA</name>
<proteinExistence type="inferred from homology"/>
<keyword id="KW-0067">ATP-binding</keyword>
<keyword id="KW-0963">Cytoplasm</keyword>
<keyword id="KW-0275">Fatty acid biosynthesis</keyword>
<keyword id="KW-0276">Fatty acid metabolism</keyword>
<keyword id="KW-0444">Lipid biosynthesis</keyword>
<keyword id="KW-0443">Lipid metabolism</keyword>
<keyword id="KW-0547">Nucleotide-binding</keyword>
<keyword id="KW-0808">Transferase</keyword>
<reference key="1">
    <citation type="journal article" date="2003" name="Nat. Genet.">
        <title>Comparative analysis of the genome sequences of Bordetella pertussis, Bordetella parapertussis and Bordetella bronchiseptica.</title>
        <authorList>
            <person name="Parkhill J."/>
            <person name="Sebaihia M."/>
            <person name="Preston A."/>
            <person name="Murphy L.D."/>
            <person name="Thomson N.R."/>
            <person name="Harris D.E."/>
            <person name="Holden M.T.G."/>
            <person name="Churcher C.M."/>
            <person name="Bentley S.D."/>
            <person name="Mungall K.L."/>
            <person name="Cerdeno-Tarraga A.-M."/>
            <person name="Temple L."/>
            <person name="James K.D."/>
            <person name="Harris B."/>
            <person name="Quail M.A."/>
            <person name="Achtman M."/>
            <person name="Atkin R."/>
            <person name="Baker S."/>
            <person name="Basham D."/>
            <person name="Bason N."/>
            <person name="Cherevach I."/>
            <person name="Chillingworth T."/>
            <person name="Collins M."/>
            <person name="Cronin A."/>
            <person name="Davis P."/>
            <person name="Doggett J."/>
            <person name="Feltwell T."/>
            <person name="Goble A."/>
            <person name="Hamlin N."/>
            <person name="Hauser H."/>
            <person name="Holroyd S."/>
            <person name="Jagels K."/>
            <person name="Leather S."/>
            <person name="Moule S."/>
            <person name="Norberczak H."/>
            <person name="O'Neil S."/>
            <person name="Ormond D."/>
            <person name="Price C."/>
            <person name="Rabbinowitsch E."/>
            <person name="Rutter S."/>
            <person name="Sanders M."/>
            <person name="Saunders D."/>
            <person name="Seeger K."/>
            <person name="Sharp S."/>
            <person name="Simmonds M."/>
            <person name="Skelton J."/>
            <person name="Squares R."/>
            <person name="Squares S."/>
            <person name="Stevens K."/>
            <person name="Unwin L."/>
            <person name="Whitehead S."/>
            <person name="Barrell B.G."/>
            <person name="Maskell D.J."/>
        </authorList>
    </citation>
    <scope>NUCLEOTIDE SEQUENCE [LARGE SCALE GENOMIC DNA]</scope>
    <source>
        <strain>12822 / ATCC BAA-587 / NCTC 13253</strain>
    </source>
</reference>
<gene>
    <name evidence="1" type="primary">accA</name>
    <name type="ordered locus">BPP2285</name>
</gene>
<organism>
    <name type="scientific">Bordetella parapertussis (strain 12822 / ATCC BAA-587 / NCTC 13253)</name>
    <dbReference type="NCBI Taxonomy" id="257311"/>
    <lineage>
        <taxon>Bacteria</taxon>
        <taxon>Pseudomonadati</taxon>
        <taxon>Pseudomonadota</taxon>
        <taxon>Betaproteobacteria</taxon>
        <taxon>Burkholderiales</taxon>
        <taxon>Alcaligenaceae</taxon>
        <taxon>Bordetella</taxon>
    </lineage>
</organism>
<evidence type="ECO:0000255" key="1">
    <source>
        <dbReference type="HAMAP-Rule" id="MF_00823"/>
    </source>
</evidence>
<evidence type="ECO:0000255" key="2">
    <source>
        <dbReference type="PROSITE-ProRule" id="PRU01137"/>
    </source>
</evidence>
<dbReference type="EC" id="2.1.3.15" evidence="1"/>
<dbReference type="EMBL" id="BX640429">
    <property type="protein sequence ID" value="CAE37583.1"/>
    <property type="molecule type" value="Genomic_DNA"/>
</dbReference>
<dbReference type="RefSeq" id="WP_003810007.1">
    <property type="nucleotide sequence ID" value="NC_002928.3"/>
</dbReference>
<dbReference type="SMR" id="Q7W860"/>
<dbReference type="KEGG" id="bpa:BPP2285"/>
<dbReference type="HOGENOM" id="CLU_015486_0_2_4"/>
<dbReference type="UniPathway" id="UPA00655">
    <property type="reaction ID" value="UER00711"/>
</dbReference>
<dbReference type="Proteomes" id="UP000001421">
    <property type="component" value="Chromosome"/>
</dbReference>
<dbReference type="GO" id="GO:0009317">
    <property type="term" value="C:acetyl-CoA carboxylase complex"/>
    <property type="evidence" value="ECO:0007669"/>
    <property type="project" value="InterPro"/>
</dbReference>
<dbReference type="GO" id="GO:0003989">
    <property type="term" value="F:acetyl-CoA carboxylase activity"/>
    <property type="evidence" value="ECO:0007669"/>
    <property type="project" value="InterPro"/>
</dbReference>
<dbReference type="GO" id="GO:0005524">
    <property type="term" value="F:ATP binding"/>
    <property type="evidence" value="ECO:0007669"/>
    <property type="project" value="UniProtKB-KW"/>
</dbReference>
<dbReference type="GO" id="GO:0016743">
    <property type="term" value="F:carboxyl- or carbamoyltransferase activity"/>
    <property type="evidence" value="ECO:0007669"/>
    <property type="project" value="UniProtKB-UniRule"/>
</dbReference>
<dbReference type="GO" id="GO:0006633">
    <property type="term" value="P:fatty acid biosynthetic process"/>
    <property type="evidence" value="ECO:0007669"/>
    <property type="project" value="UniProtKB-KW"/>
</dbReference>
<dbReference type="GO" id="GO:2001295">
    <property type="term" value="P:malonyl-CoA biosynthetic process"/>
    <property type="evidence" value="ECO:0007669"/>
    <property type="project" value="UniProtKB-UniRule"/>
</dbReference>
<dbReference type="Gene3D" id="3.90.226.10">
    <property type="entry name" value="2-enoyl-CoA Hydratase, Chain A, domain 1"/>
    <property type="match status" value="1"/>
</dbReference>
<dbReference type="HAMAP" id="MF_00823">
    <property type="entry name" value="AcetylCoA_CT_alpha"/>
    <property type="match status" value="1"/>
</dbReference>
<dbReference type="InterPro" id="IPR001095">
    <property type="entry name" value="Acetyl_CoA_COase_a_su"/>
</dbReference>
<dbReference type="InterPro" id="IPR029045">
    <property type="entry name" value="ClpP/crotonase-like_dom_sf"/>
</dbReference>
<dbReference type="InterPro" id="IPR011763">
    <property type="entry name" value="COA_CT_C"/>
</dbReference>
<dbReference type="NCBIfam" id="TIGR00513">
    <property type="entry name" value="accA"/>
    <property type="match status" value="1"/>
</dbReference>
<dbReference type="NCBIfam" id="NF041504">
    <property type="entry name" value="AccA_sub"/>
    <property type="match status" value="1"/>
</dbReference>
<dbReference type="NCBIfam" id="NF004344">
    <property type="entry name" value="PRK05724.1"/>
    <property type="match status" value="1"/>
</dbReference>
<dbReference type="PANTHER" id="PTHR42853">
    <property type="entry name" value="ACETYL-COENZYME A CARBOXYLASE CARBOXYL TRANSFERASE SUBUNIT ALPHA"/>
    <property type="match status" value="1"/>
</dbReference>
<dbReference type="PANTHER" id="PTHR42853:SF3">
    <property type="entry name" value="ACETYL-COENZYME A CARBOXYLASE CARBOXYL TRANSFERASE SUBUNIT ALPHA, CHLOROPLASTIC"/>
    <property type="match status" value="1"/>
</dbReference>
<dbReference type="Pfam" id="PF03255">
    <property type="entry name" value="ACCA"/>
    <property type="match status" value="1"/>
</dbReference>
<dbReference type="PRINTS" id="PR01069">
    <property type="entry name" value="ACCCTRFRASEA"/>
</dbReference>
<dbReference type="SUPFAM" id="SSF52096">
    <property type="entry name" value="ClpP/crotonase"/>
    <property type="match status" value="1"/>
</dbReference>
<dbReference type="PROSITE" id="PS50989">
    <property type="entry name" value="COA_CT_CTER"/>
    <property type="match status" value="1"/>
</dbReference>
<feature type="chain" id="PRO_0000223740" description="Acetyl-coenzyme A carboxylase carboxyl transferase subunit alpha">
    <location>
        <begin position="1"/>
        <end position="321"/>
    </location>
</feature>
<feature type="domain" description="CoA carboxyltransferase C-terminal" evidence="2">
    <location>
        <begin position="39"/>
        <end position="293"/>
    </location>
</feature>